<accession>A8GU63</accession>
<evidence type="ECO:0000255" key="1">
    <source>
        <dbReference type="HAMAP-Rule" id="MF_00333"/>
    </source>
</evidence>
<dbReference type="EC" id="1.3.3.3" evidence="1"/>
<dbReference type="EMBL" id="CP000848">
    <property type="protein sequence ID" value="ABV76938.1"/>
    <property type="molecule type" value="Genomic_DNA"/>
</dbReference>
<dbReference type="RefSeq" id="WP_012151472.1">
    <property type="nucleotide sequence ID" value="NZ_CP121767.1"/>
</dbReference>
<dbReference type="SMR" id="A8GU63"/>
<dbReference type="GeneID" id="79937959"/>
<dbReference type="KEGG" id="rri:A1G_07495"/>
<dbReference type="HOGENOM" id="CLU_026169_0_1_5"/>
<dbReference type="UniPathway" id="UPA00251">
    <property type="reaction ID" value="UER00322"/>
</dbReference>
<dbReference type="Proteomes" id="UP000006832">
    <property type="component" value="Chromosome"/>
</dbReference>
<dbReference type="GO" id="GO:0005737">
    <property type="term" value="C:cytoplasm"/>
    <property type="evidence" value="ECO:0007669"/>
    <property type="project" value="UniProtKB-SubCell"/>
</dbReference>
<dbReference type="GO" id="GO:0004109">
    <property type="term" value="F:coproporphyrinogen oxidase activity"/>
    <property type="evidence" value="ECO:0007669"/>
    <property type="project" value="UniProtKB-UniRule"/>
</dbReference>
<dbReference type="GO" id="GO:0046872">
    <property type="term" value="F:metal ion binding"/>
    <property type="evidence" value="ECO:0007669"/>
    <property type="project" value="UniProtKB-KW"/>
</dbReference>
<dbReference type="GO" id="GO:0042803">
    <property type="term" value="F:protein homodimerization activity"/>
    <property type="evidence" value="ECO:0000250"/>
    <property type="project" value="UniProtKB"/>
</dbReference>
<dbReference type="GO" id="GO:0006782">
    <property type="term" value="P:protoporphyrinogen IX biosynthetic process"/>
    <property type="evidence" value="ECO:0007669"/>
    <property type="project" value="UniProtKB-UniRule"/>
</dbReference>
<dbReference type="FunFam" id="3.40.1500.10:FF:000005">
    <property type="entry name" value="Oxygen-dependent coproporphyrinogen-III oxidase"/>
    <property type="match status" value="1"/>
</dbReference>
<dbReference type="Gene3D" id="3.40.1500.10">
    <property type="entry name" value="Coproporphyrinogen III oxidase, aerobic"/>
    <property type="match status" value="1"/>
</dbReference>
<dbReference type="HAMAP" id="MF_00333">
    <property type="entry name" value="Coprogen_oxidas"/>
    <property type="match status" value="1"/>
</dbReference>
<dbReference type="InterPro" id="IPR001260">
    <property type="entry name" value="Coprogen_oxidase_aer"/>
</dbReference>
<dbReference type="InterPro" id="IPR036406">
    <property type="entry name" value="Coprogen_oxidase_aer_sf"/>
</dbReference>
<dbReference type="InterPro" id="IPR018375">
    <property type="entry name" value="Coprogen_oxidase_CS"/>
</dbReference>
<dbReference type="NCBIfam" id="NF003727">
    <property type="entry name" value="PRK05330.1"/>
    <property type="match status" value="1"/>
</dbReference>
<dbReference type="PANTHER" id="PTHR10755">
    <property type="entry name" value="COPROPORPHYRINOGEN III OXIDASE, MITOCHONDRIAL"/>
    <property type="match status" value="1"/>
</dbReference>
<dbReference type="PANTHER" id="PTHR10755:SF0">
    <property type="entry name" value="OXYGEN-DEPENDENT COPROPORPHYRINOGEN-III OXIDASE, MITOCHONDRIAL"/>
    <property type="match status" value="1"/>
</dbReference>
<dbReference type="Pfam" id="PF01218">
    <property type="entry name" value="Coprogen_oxidas"/>
    <property type="match status" value="1"/>
</dbReference>
<dbReference type="PIRSF" id="PIRSF000166">
    <property type="entry name" value="Coproporphyri_ox"/>
    <property type="match status" value="1"/>
</dbReference>
<dbReference type="PRINTS" id="PR00073">
    <property type="entry name" value="COPRGNOXDASE"/>
</dbReference>
<dbReference type="SUPFAM" id="SSF102886">
    <property type="entry name" value="Coproporphyrinogen III oxidase"/>
    <property type="match status" value="1"/>
</dbReference>
<dbReference type="PROSITE" id="PS01021">
    <property type="entry name" value="COPROGEN_OXIDASE"/>
    <property type="match status" value="1"/>
</dbReference>
<protein>
    <recommendedName>
        <fullName evidence="1">Oxygen-dependent coproporphyrinogen-III oxidase</fullName>
        <shortName evidence="1">CPO</shortName>
        <shortName evidence="1">Coprogen oxidase</shortName>
        <shortName evidence="1">Coproporphyrinogenase</shortName>
        <ecNumber evidence="1">1.3.3.3</ecNumber>
    </recommendedName>
</protein>
<reference key="1">
    <citation type="submission" date="2007-09" db="EMBL/GenBank/DDBJ databases">
        <title>Complete genome sequence of Rickettsia rickettsii.</title>
        <authorList>
            <person name="Madan A."/>
            <person name="Fahey J."/>
            <person name="Helton E."/>
            <person name="Ketteman M."/>
            <person name="Madan A."/>
            <person name="Rodrigues S."/>
            <person name="Sanchez A."/>
            <person name="Dasch G."/>
            <person name="Eremeeva M."/>
        </authorList>
    </citation>
    <scope>NUCLEOTIDE SEQUENCE [LARGE SCALE GENOMIC DNA]</scope>
    <source>
        <strain>Sheila Smith</strain>
    </source>
</reference>
<name>HEM6_RICRS</name>
<keyword id="KW-0963">Cytoplasm</keyword>
<keyword id="KW-0350">Heme biosynthesis</keyword>
<keyword id="KW-0479">Metal-binding</keyword>
<keyword id="KW-0560">Oxidoreductase</keyword>
<keyword id="KW-0627">Porphyrin biosynthesis</keyword>
<feature type="chain" id="PRO_1000019494" description="Oxygen-dependent coproporphyrinogen-III oxidase">
    <location>
        <begin position="1"/>
        <end position="279"/>
    </location>
</feature>
<feature type="region of interest" description="Important for dimerization" evidence="1">
    <location>
        <begin position="244"/>
        <end position="279"/>
    </location>
</feature>
<feature type="active site" description="Proton donor" evidence="1">
    <location>
        <position position="116"/>
    </location>
</feature>
<feature type="binding site" evidence="1">
    <location>
        <position position="102"/>
    </location>
    <ligand>
        <name>substrate</name>
    </ligand>
</feature>
<feature type="binding site" evidence="1">
    <location>
        <position position="106"/>
    </location>
    <ligand>
        <name>a divalent metal cation</name>
        <dbReference type="ChEBI" id="CHEBI:60240"/>
    </ligand>
</feature>
<feature type="binding site" evidence="1">
    <location>
        <position position="116"/>
    </location>
    <ligand>
        <name>a divalent metal cation</name>
        <dbReference type="ChEBI" id="CHEBI:60240"/>
    </ligand>
</feature>
<feature type="binding site" evidence="1">
    <location>
        <begin position="118"/>
        <end position="120"/>
    </location>
    <ligand>
        <name>substrate</name>
    </ligand>
</feature>
<feature type="binding site" evidence="1">
    <location>
        <position position="149"/>
    </location>
    <ligand>
        <name>a divalent metal cation</name>
        <dbReference type="ChEBI" id="CHEBI:60240"/>
    </ligand>
</feature>
<feature type="binding site" evidence="1">
    <location>
        <position position="179"/>
    </location>
    <ligand>
        <name>a divalent metal cation</name>
        <dbReference type="ChEBI" id="CHEBI:60240"/>
    </ligand>
</feature>
<feature type="site" description="Important for dimerization" evidence="1">
    <location>
        <position position="179"/>
    </location>
</feature>
<proteinExistence type="inferred from homology"/>
<organism>
    <name type="scientific">Rickettsia rickettsii (strain Sheila Smith)</name>
    <dbReference type="NCBI Taxonomy" id="392021"/>
    <lineage>
        <taxon>Bacteria</taxon>
        <taxon>Pseudomonadati</taxon>
        <taxon>Pseudomonadota</taxon>
        <taxon>Alphaproteobacteria</taxon>
        <taxon>Rickettsiales</taxon>
        <taxon>Rickettsiaceae</taxon>
        <taxon>Rickettsieae</taxon>
        <taxon>Rickettsia</taxon>
        <taxon>spotted fever group</taxon>
    </lineage>
</organism>
<comment type="function">
    <text evidence="1">Involved in the heme biosynthesis. Catalyzes the aerobic oxidative decarboxylation of propionate groups of rings A and B of coproporphyrinogen-III to yield the vinyl groups in protoporphyrinogen-IX.</text>
</comment>
<comment type="catalytic activity">
    <reaction evidence="1">
        <text>coproporphyrinogen III + O2 + 2 H(+) = protoporphyrinogen IX + 2 CO2 + 2 H2O</text>
        <dbReference type="Rhea" id="RHEA:18257"/>
        <dbReference type="ChEBI" id="CHEBI:15377"/>
        <dbReference type="ChEBI" id="CHEBI:15378"/>
        <dbReference type="ChEBI" id="CHEBI:15379"/>
        <dbReference type="ChEBI" id="CHEBI:16526"/>
        <dbReference type="ChEBI" id="CHEBI:57307"/>
        <dbReference type="ChEBI" id="CHEBI:57309"/>
        <dbReference type="EC" id="1.3.3.3"/>
    </reaction>
</comment>
<comment type="cofactor">
    <cofactor evidence="1">
        <name>a divalent metal cation</name>
        <dbReference type="ChEBI" id="CHEBI:60240"/>
    </cofactor>
</comment>
<comment type="pathway">
    <text evidence="1">Porphyrin-containing compound metabolism; protoporphyrin-IX biosynthesis; protoporphyrinogen-IX from coproporphyrinogen-III (O2 route): step 1/1.</text>
</comment>
<comment type="subunit">
    <text evidence="1">Homodimer.</text>
</comment>
<comment type="subcellular location">
    <subcellularLocation>
        <location evidence="1">Cytoplasm</location>
    </subcellularLocation>
</comment>
<comment type="similarity">
    <text evidence="1">Belongs to the aerobic coproporphyrinogen-III oxidase family.</text>
</comment>
<gene>
    <name evidence="1" type="primary">hemF</name>
    <name type="ordered locus">A1G_07495</name>
</gene>
<sequence length="279" mass="32041">MNIENKEITSSWFTNLRDLLCKEFEKIEEEYAQTKGLKPAKFVRSSWQRNGGGGGVMSLMKGAVFEKVGVNISTVFGKISPEFRNEIPGAELDGKFFATGISLVAHLKSPLIPAMHFNTRYIETSKSWFGGGGDLTPFYPEKNETVKFHAAFKEVCDKYDSSYYPKFKKQCDEYFYLKHRKEPRGVGGIFYDYLNNGNFEQDFAFTQDVGKTLLSVYPEIVRSKLFLPWTAEQKEYQLIRRGRYVEFNLLYDRGTKFGLMTDGNVEAILMSLPPEVKFN</sequence>